<sequence>MPFSLVRIDEDDVLEYVFERYTAINSDADSIRQDLGIQDSKSTTLNIEIAPPKSLINDTNITKKGKKKKGNKSSSDYDFYSFEIKQNVTSLHSTRDNDNSTTGYVLWSLTPVFCEWLLYNEQASPLHRAQMVNICSLEKKIIHDIEFPSLLNEDTTVIELGSGISSVLPILCSNFVGTYICTDQRGILNGLKQNIANNLDLVNKRTIVSETLDISNIQEQPTNSDDETIPIKPTTQLEVAILDWETFPKSIKSGSSNILTDFVKPHGTIFLLALDVIYNEYLINPFLHTLHSIMFYYKNQREIVALVGIHLRSDDIVQEFLEKVTTEFPFKLHVVDDPQWSHSRYDIYYITL</sequence>
<organism>
    <name type="scientific">Candida glabrata (strain ATCC 2001 / BCRC 20586 / JCM 3761 / NBRC 0622 / NRRL Y-65 / CBS 138)</name>
    <name type="common">Yeast</name>
    <name type="synonym">Nakaseomyces glabratus</name>
    <dbReference type="NCBI Taxonomy" id="284593"/>
    <lineage>
        <taxon>Eukaryota</taxon>
        <taxon>Fungi</taxon>
        <taxon>Dikarya</taxon>
        <taxon>Ascomycota</taxon>
        <taxon>Saccharomycotina</taxon>
        <taxon>Saccharomycetes</taxon>
        <taxon>Saccharomycetales</taxon>
        <taxon>Saccharomycetaceae</taxon>
        <taxon>Nakaseomyces</taxon>
    </lineage>
</organism>
<dbReference type="EC" id="2.1.1.-" evidence="1"/>
<dbReference type="EMBL" id="CR380959">
    <property type="protein sequence ID" value="CAG62515.1"/>
    <property type="molecule type" value="Genomic_DNA"/>
</dbReference>
<dbReference type="RefSeq" id="XP_449539.1">
    <property type="nucleotide sequence ID" value="XM_449539.1"/>
</dbReference>
<dbReference type="SMR" id="Q6FJQ5"/>
<dbReference type="FunCoup" id="Q6FJQ5">
    <property type="interactions" value="18"/>
</dbReference>
<dbReference type="STRING" id="284593.Q6FJQ5"/>
<dbReference type="EnsemblFungi" id="CAGL0M04411g-T">
    <property type="protein sequence ID" value="CAGL0M04411g-T-p1"/>
    <property type="gene ID" value="CAGL0M04411g"/>
</dbReference>
<dbReference type="KEGG" id="cgr:2891548"/>
<dbReference type="CGD" id="CAL0137451">
    <property type="gene designation" value="CAGL0M04411g"/>
</dbReference>
<dbReference type="VEuPathDB" id="FungiDB:CAGL0M04411g"/>
<dbReference type="eggNOG" id="KOG1018">
    <property type="taxonomic scope" value="Eukaryota"/>
</dbReference>
<dbReference type="HOGENOM" id="CLU_051532_0_0_1"/>
<dbReference type="InParanoid" id="Q6FJQ5"/>
<dbReference type="OMA" id="HSTRDND"/>
<dbReference type="Proteomes" id="UP000002428">
    <property type="component" value="Chromosome M"/>
</dbReference>
<dbReference type="GO" id="GO:0005829">
    <property type="term" value="C:cytosol"/>
    <property type="evidence" value="ECO:0007669"/>
    <property type="project" value="TreeGrafter"/>
</dbReference>
<dbReference type="GO" id="GO:0032991">
    <property type="term" value="C:protein-containing complex"/>
    <property type="evidence" value="ECO:0007669"/>
    <property type="project" value="TreeGrafter"/>
</dbReference>
<dbReference type="GO" id="GO:0008757">
    <property type="term" value="F:S-adenosylmethionine-dependent methyltransferase activity"/>
    <property type="evidence" value="ECO:0007669"/>
    <property type="project" value="EnsemblFungi"/>
</dbReference>
<dbReference type="GO" id="GO:0032259">
    <property type="term" value="P:methylation"/>
    <property type="evidence" value="ECO:0007669"/>
    <property type="project" value="UniProtKB-KW"/>
</dbReference>
<dbReference type="Gene3D" id="3.40.50.150">
    <property type="entry name" value="Vaccinia Virus protein VP39"/>
    <property type="match status" value="1"/>
</dbReference>
<dbReference type="InterPro" id="IPR019410">
    <property type="entry name" value="Methyltransf_16"/>
</dbReference>
<dbReference type="InterPro" id="IPR029063">
    <property type="entry name" value="SAM-dependent_MTases_sf"/>
</dbReference>
<dbReference type="PANTHER" id="PTHR14614">
    <property type="entry name" value="HEPATOCELLULAR CARCINOMA-ASSOCIATED ANTIGEN"/>
    <property type="match status" value="1"/>
</dbReference>
<dbReference type="PANTHER" id="PTHR14614:SF109">
    <property type="entry name" value="RIBOSOMAL LYSINE N-METHYLTRANSFERASE 5"/>
    <property type="match status" value="1"/>
</dbReference>
<proteinExistence type="inferred from homology"/>
<name>RKM5_CANGA</name>
<accession>Q6FJQ5</accession>
<protein>
    <recommendedName>
        <fullName evidence="1">Ribosomal lysine N-methyltransferase 5</fullName>
        <ecNumber evidence="1">2.1.1.-</ecNumber>
    </recommendedName>
</protein>
<gene>
    <name type="primary">RKM5</name>
    <name type="ordered locus">CAGL0M04411g</name>
</gene>
<evidence type="ECO:0000250" key="1">
    <source>
        <dbReference type="UniProtKB" id="Q12367"/>
    </source>
</evidence>
<evidence type="ECO:0000250" key="2">
    <source>
        <dbReference type="UniProtKB" id="Q9H867"/>
    </source>
</evidence>
<evidence type="ECO:0000305" key="3"/>
<feature type="chain" id="PRO_0000411041" description="Ribosomal lysine N-methyltransferase 5">
    <location>
        <begin position="1"/>
        <end position="352"/>
    </location>
</feature>
<feature type="binding site" evidence="2">
    <location>
        <position position="107"/>
    </location>
    <ligand>
        <name>S-adenosyl-L-methionine</name>
        <dbReference type="ChEBI" id="CHEBI:59789"/>
    </ligand>
</feature>
<feature type="binding site" evidence="2">
    <location>
        <begin position="161"/>
        <end position="163"/>
    </location>
    <ligand>
        <name>S-adenosyl-L-methionine</name>
        <dbReference type="ChEBI" id="CHEBI:59789"/>
    </ligand>
</feature>
<feature type="binding site" evidence="2">
    <location>
        <position position="183"/>
    </location>
    <ligand>
        <name>S-adenosyl-L-methionine</name>
        <dbReference type="ChEBI" id="CHEBI:59789"/>
    </ligand>
</feature>
<feature type="binding site" evidence="2">
    <location>
        <position position="244"/>
    </location>
    <ligand>
        <name>S-adenosyl-L-methionine</name>
        <dbReference type="ChEBI" id="CHEBI:59789"/>
    </ligand>
</feature>
<feature type="binding site" evidence="2">
    <location>
        <position position="274"/>
    </location>
    <ligand>
        <name>S-adenosyl-L-methionine</name>
        <dbReference type="ChEBI" id="CHEBI:59789"/>
    </ligand>
</feature>
<keyword id="KW-0489">Methyltransferase</keyword>
<keyword id="KW-1185">Reference proteome</keyword>
<keyword id="KW-0949">S-adenosyl-L-methionine</keyword>
<keyword id="KW-0808">Transferase</keyword>
<comment type="function">
    <text evidence="1">S-adenosyl-L-methionine-dependent protein-lysine N-methyltransferase that methylates 60S ribosomal protein L1.</text>
</comment>
<comment type="similarity">
    <text evidence="3">Belongs to the class I-like SAM-binding methyltransferase superfamily. RKM5 family.</text>
</comment>
<reference key="1">
    <citation type="journal article" date="2004" name="Nature">
        <title>Genome evolution in yeasts.</title>
        <authorList>
            <person name="Dujon B."/>
            <person name="Sherman D."/>
            <person name="Fischer G."/>
            <person name="Durrens P."/>
            <person name="Casaregola S."/>
            <person name="Lafontaine I."/>
            <person name="de Montigny J."/>
            <person name="Marck C."/>
            <person name="Neuveglise C."/>
            <person name="Talla E."/>
            <person name="Goffard N."/>
            <person name="Frangeul L."/>
            <person name="Aigle M."/>
            <person name="Anthouard V."/>
            <person name="Babour A."/>
            <person name="Barbe V."/>
            <person name="Barnay S."/>
            <person name="Blanchin S."/>
            <person name="Beckerich J.-M."/>
            <person name="Beyne E."/>
            <person name="Bleykasten C."/>
            <person name="Boisrame A."/>
            <person name="Boyer J."/>
            <person name="Cattolico L."/>
            <person name="Confanioleri F."/>
            <person name="de Daruvar A."/>
            <person name="Despons L."/>
            <person name="Fabre E."/>
            <person name="Fairhead C."/>
            <person name="Ferry-Dumazet H."/>
            <person name="Groppi A."/>
            <person name="Hantraye F."/>
            <person name="Hennequin C."/>
            <person name="Jauniaux N."/>
            <person name="Joyet P."/>
            <person name="Kachouri R."/>
            <person name="Kerrest A."/>
            <person name="Koszul R."/>
            <person name="Lemaire M."/>
            <person name="Lesur I."/>
            <person name="Ma L."/>
            <person name="Muller H."/>
            <person name="Nicaud J.-M."/>
            <person name="Nikolski M."/>
            <person name="Oztas S."/>
            <person name="Ozier-Kalogeropoulos O."/>
            <person name="Pellenz S."/>
            <person name="Potier S."/>
            <person name="Richard G.-F."/>
            <person name="Straub M.-L."/>
            <person name="Suleau A."/>
            <person name="Swennen D."/>
            <person name="Tekaia F."/>
            <person name="Wesolowski-Louvel M."/>
            <person name="Westhof E."/>
            <person name="Wirth B."/>
            <person name="Zeniou-Meyer M."/>
            <person name="Zivanovic Y."/>
            <person name="Bolotin-Fukuhara M."/>
            <person name="Thierry A."/>
            <person name="Bouchier C."/>
            <person name="Caudron B."/>
            <person name="Scarpelli C."/>
            <person name="Gaillardin C."/>
            <person name="Weissenbach J."/>
            <person name="Wincker P."/>
            <person name="Souciet J.-L."/>
        </authorList>
    </citation>
    <scope>NUCLEOTIDE SEQUENCE [LARGE SCALE GENOMIC DNA]</scope>
    <source>
        <strain>ATCC 2001 / BCRC 20586 / JCM 3761 / NBRC 0622 / NRRL Y-65 / CBS 138</strain>
    </source>
</reference>